<gene>
    <name evidence="1" type="primary">atpD</name>
    <name type="ordered locus">SPJ_1231</name>
</gene>
<organism>
    <name type="scientific">Streptococcus pneumoniae (strain JJA)</name>
    <dbReference type="NCBI Taxonomy" id="488222"/>
    <lineage>
        <taxon>Bacteria</taxon>
        <taxon>Bacillati</taxon>
        <taxon>Bacillota</taxon>
        <taxon>Bacilli</taxon>
        <taxon>Lactobacillales</taxon>
        <taxon>Streptococcaceae</taxon>
        <taxon>Streptococcus</taxon>
    </lineage>
</organism>
<name>VATD_STRZJ</name>
<comment type="function">
    <text evidence="1">Produces ATP from ADP in the presence of a proton gradient across the membrane.</text>
</comment>
<comment type="similarity">
    <text evidence="1">Belongs to the V-ATPase D subunit family.</text>
</comment>
<evidence type="ECO:0000255" key="1">
    <source>
        <dbReference type="HAMAP-Rule" id="MF_00271"/>
    </source>
</evidence>
<protein>
    <recommendedName>
        <fullName evidence="1">V-type ATP synthase subunit D</fullName>
    </recommendedName>
    <alternativeName>
        <fullName evidence="1">V-ATPase subunit D</fullName>
    </alternativeName>
</protein>
<reference key="1">
    <citation type="journal article" date="2010" name="Genome Biol.">
        <title>Structure and dynamics of the pan-genome of Streptococcus pneumoniae and closely related species.</title>
        <authorList>
            <person name="Donati C."/>
            <person name="Hiller N.L."/>
            <person name="Tettelin H."/>
            <person name="Muzzi A."/>
            <person name="Croucher N.J."/>
            <person name="Angiuoli S.V."/>
            <person name="Oggioni M."/>
            <person name="Dunning Hotopp J.C."/>
            <person name="Hu F.Z."/>
            <person name="Riley D.R."/>
            <person name="Covacci A."/>
            <person name="Mitchell T.J."/>
            <person name="Bentley S.D."/>
            <person name="Kilian M."/>
            <person name="Ehrlich G.D."/>
            <person name="Rappuoli R."/>
            <person name="Moxon E.R."/>
            <person name="Masignani V."/>
        </authorList>
    </citation>
    <scope>NUCLEOTIDE SEQUENCE [LARGE SCALE GENOMIC DNA]</scope>
    <source>
        <strain>JJA</strain>
    </source>
</reference>
<feature type="chain" id="PRO_1000173516" description="V-type ATP synthase subunit D">
    <location>
        <begin position="1"/>
        <end position="203"/>
    </location>
</feature>
<sequence>MVRLNVKPTRMELNNLKERLTTAERGHKLLKDKRDELMRRFISLIRENNQLRKEVESYLIDNLKSFAVAKSLKNSQMVEELFSIPSKEIELFVEKENIMSVTVPRMHMNITSQNENSEYSYLSSNSEMDDVFATMNSLIYKLLRLAEVEKTCQLMADEIEKTRRRVNGLEYSIIPNLSETIHYIELKLEEAERANLVRIMKVK</sequence>
<proteinExistence type="inferred from homology"/>
<keyword id="KW-0066">ATP synthesis</keyword>
<keyword id="KW-0375">Hydrogen ion transport</keyword>
<keyword id="KW-0406">Ion transport</keyword>
<keyword id="KW-0813">Transport</keyword>
<accession>C1CES0</accession>
<dbReference type="EMBL" id="CP000919">
    <property type="protein sequence ID" value="ACO19692.1"/>
    <property type="molecule type" value="Genomic_DNA"/>
</dbReference>
<dbReference type="RefSeq" id="WP_000251935.1">
    <property type="nucleotide sequence ID" value="NC_012466.1"/>
</dbReference>
<dbReference type="SMR" id="C1CES0"/>
<dbReference type="KEGG" id="sjj:SPJ_1231"/>
<dbReference type="HOGENOM" id="CLU_069688_2_1_9"/>
<dbReference type="Proteomes" id="UP000002206">
    <property type="component" value="Chromosome"/>
</dbReference>
<dbReference type="GO" id="GO:0005524">
    <property type="term" value="F:ATP binding"/>
    <property type="evidence" value="ECO:0007669"/>
    <property type="project" value="UniProtKB-UniRule"/>
</dbReference>
<dbReference type="GO" id="GO:0046933">
    <property type="term" value="F:proton-transporting ATP synthase activity, rotational mechanism"/>
    <property type="evidence" value="ECO:0007669"/>
    <property type="project" value="UniProtKB-UniRule"/>
</dbReference>
<dbReference type="GO" id="GO:0046961">
    <property type="term" value="F:proton-transporting ATPase activity, rotational mechanism"/>
    <property type="evidence" value="ECO:0007669"/>
    <property type="project" value="InterPro"/>
</dbReference>
<dbReference type="GO" id="GO:0042777">
    <property type="term" value="P:proton motive force-driven plasma membrane ATP synthesis"/>
    <property type="evidence" value="ECO:0007669"/>
    <property type="project" value="UniProtKB-UniRule"/>
</dbReference>
<dbReference type="Gene3D" id="1.10.287.3240">
    <property type="match status" value="1"/>
</dbReference>
<dbReference type="HAMAP" id="MF_00271">
    <property type="entry name" value="ATP_synth_D_arch"/>
    <property type="match status" value="1"/>
</dbReference>
<dbReference type="InterPro" id="IPR002699">
    <property type="entry name" value="V_ATPase_D"/>
</dbReference>
<dbReference type="NCBIfam" id="NF001546">
    <property type="entry name" value="PRK00373.1-5"/>
    <property type="match status" value="1"/>
</dbReference>
<dbReference type="NCBIfam" id="TIGR00309">
    <property type="entry name" value="V_ATPase_subD"/>
    <property type="match status" value="1"/>
</dbReference>
<dbReference type="PANTHER" id="PTHR11671">
    <property type="entry name" value="V-TYPE ATP SYNTHASE SUBUNIT D"/>
    <property type="match status" value="1"/>
</dbReference>
<dbReference type="Pfam" id="PF01813">
    <property type="entry name" value="ATP-synt_D"/>
    <property type="match status" value="1"/>
</dbReference>